<keyword id="KW-0276">Fatty acid metabolism</keyword>
<keyword id="KW-0413">Isomerase</keyword>
<keyword id="KW-0442">Lipid degradation</keyword>
<keyword id="KW-0443">Lipid metabolism</keyword>
<keyword id="KW-0456">Lyase</keyword>
<keyword id="KW-0511">Multifunctional enzyme</keyword>
<keyword id="KW-0520">NAD</keyword>
<keyword id="KW-0560">Oxidoreductase</keyword>
<keyword id="KW-1185">Reference proteome</keyword>
<accession>A8ACZ4</accession>
<evidence type="ECO:0000255" key="1">
    <source>
        <dbReference type="HAMAP-Rule" id="MF_01621"/>
    </source>
</evidence>
<evidence type="ECO:0000256" key="2">
    <source>
        <dbReference type="SAM" id="MobiDB-lite"/>
    </source>
</evidence>
<gene>
    <name evidence="1" type="primary">fadB</name>
    <name type="ordered locus">CKO_00188</name>
</gene>
<reference key="1">
    <citation type="submission" date="2007-08" db="EMBL/GenBank/DDBJ databases">
        <authorList>
            <consortium name="The Citrobacter koseri Genome Sequencing Project"/>
            <person name="McClelland M."/>
            <person name="Sanderson E.K."/>
            <person name="Porwollik S."/>
            <person name="Spieth J."/>
            <person name="Clifton W.S."/>
            <person name="Latreille P."/>
            <person name="Courtney L."/>
            <person name="Wang C."/>
            <person name="Pepin K."/>
            <person name="Bhonagiri V."/>
            <person name="Nash W."/>
            <person name="Johnson M."/>
            <person name="Thiruvilangam P."/>
            <person name="Wilson R."/>
        </authorList>
    </citation>
    <scope>NUCLEOTIDE SEQUENCE [LARGE SCALE GENOMIC DNA]</scope>
    <source>
        <strain>ATCC BAA-895 / CDC 4225-83 / SGSC4696</strain>
    </source>
</reference>
<organism>
    <name type="scientific">Citrobacter koseri (strain ATCC BAA-895 / CDC 4225-83 / SGSC4696)</name>
    <dbReference type="NCBI Taxonomy" id="290338"/>
    <lineage>
        <taxon>Bacteria</taxon>
        <taxon>Pseudomonadati</taxon>
        <taxon>Pseudomonadota</taxon>
        <taxon>Gammaproteobacteria</taxon>
        <taxon>Enterobacterales</taxon>
        <taxon>Enterobacteriaceae</taxon>
        <taxon>Citrobacter</taxon>
    </lineage>
</organism>
<protein>
    <recommendedName>
        <fullName evidence="1">Fatty acid oxidation complex subunit alpha</fullName>
    </recommendedName>
    <domain>
        <recommendedName>
            <fullName evidence="1">Enoyl-CoA hydratase/Delta(3)-cis-Delta(2)-trans-enoyl-CoA isomerase/3-hydroxybutyryl-CoA epimerase</fullName>
            <ecNumber evidence="1">4.2.1.17</ecNumber>
            <ecNumber evidence="1">5.1.2.3</ecNumber>
            <ecNumber evidence="1">5.3.3.8</ecNumber>
        </recommendedName>
    </domain>
    <domain>
        <recommendedName>
            <fullName evidence="1">3-hydroxyacyl-CoA dehydrogenase</fullName>
            <ecNumber evidence="1">1.1.1.35</ecNumber>
        </recommendedName>
    </domain>
</protein>
<proteinExistence type="inferred from homology"/>
<feature type="chain" id="PRO_1000069559" description="Fatty acid oxidation complex subunit alpha">
    <location>
        <begin position="1"/>
        <end position="729"/>
    </location>
</feature>
<feature type="region of interest" description="Enoyl-CoA hydratase/isomerase" evidence="1">
    <location>
        <begin position="1"/>
        <end position="189"/>
    </location>
</feature>
<feature type="region of interest" description="3-hydroxyacyl-CoA dehydrogenase" evidence="1">
    <location>
        <begin position="311"/>
        <end position="729"/>
    </location>
</feature>
<feature type="region of interest" description="Disordered" evidence="2">
    <location>
        <begin position="708"/>
        <end position="729"/>
    </location>
</feature>
<feature type="active site" description="For 3-hydroxyacyl-CoA dehydrogenase activity" evidence="1">
    <location>
        <position position="450"/>
    </location>
</feature>
<feature type="binding site" evidence="1">
    <location>
        <position position="296"/>
    </location>
    <ligand>
        <name>substrate</name>
    </ligand>
</feature>
<feature type="binding site" evidence="1">
    <location>
        <position position="324"/>
    </location>
    <ligand>
        <name>NAD(+)</name>
        <dbReference type="ChEBI" id="CHEBI:57540"/>
    </ligand>
</feature>
<feature type="binding site" evidence="1">
    <location>
        <position position="343"/>
    </location>
    <ligand>
        <name>NAD(+)</name>
        <dbReference type="ChEBI" id="CHEBI:57540"/>
    </ligand>
</feature>
<feature type="binding site" evidence="1">
    <location>
        <begin position="400"/>
        <end position="402"/>
    </location>
    <ligand>
        <name>NAD(+)</name>
        <dbReference type="ChEBI" id="CHEBI:57540"/>
    </ligand>
</feature>
<feature type="binding site" evidence="1">
    <location>
        <position position="407"/>
    </location>
    <ligand>
        <name>NAD(+)</name>
        <dbReference type="ChEBI" id="CHEBI:57540"/>
    </ligand>
</feature>
<feature type="binding site" evidence="1">
    <location>
        <position position="429"/>
    </location>
    <ligand>
        <name>NAD(+)</name>
        <dbReference type="ChEBI" id="CHEBI:57540"/>
    </ligand>
</feature>
<feature type="binding site" evidence="1">
    <location>
        <position position="453"/>
    </location>
    <ligand>
        <name>NAD(+)</name>
        <dbReference type="ChEBI" id="CHEBI:57540"/>
    </ligand>
</feature>
<feature type="binding site" evidence="1">
    <location>
        <position position="500"/>
    </location>
    <ligand>
        <name>substrate</name>
    </ligand>
</feature>
<feature type="binding site" evidence="1">
    <location>
        <position position="660"/>
    </location>
    <ligand>
        <name>substrate</name>
    </ligand>
</feature>
<feature type="site" description="Important for catalytic activity" evidence="1">
    <location>
        <position position="119"/>
    </location>
</feature>
<feature type="site" description="Important for catalytic activity" evidence="1">
    <location>
        <position position="139"/>
    </location>
</feature>
<comment type="function">
    <text evidence="1">Involved in the aerobic and anaerobic degradation of long-chain fatty acids via beta-oxidation cycle. Catalyzes the formation of 3-oxoacyl-CoA from enoyl-CoA via L-3-hydroxyacyl-CoA. It can also use D-3-hydroxyacyl-CoA and cis-3-enoyl-CoA as substrate.</text>
</comment>
<comment type="catalytic activity">
    <reaction evidence="1">
        <text>a (3S)-3-hydroxyacyl-CoA + NAD(+) = a 3-oxoacyl-CoA + NADH + H(+)</text>
        <dbReference type="Rhea" id="RHEA:22432"/>
        <dbReference type="ChEBI" id="CHEBI:15378"/>
        <dbReference type="ChEBI" id="CHEBI:57318"/>
        <dbReference type="ChEBI" id="CHEBI:57540"/>
        <dbReference type="ChEBI" id="CHEBI:57945"/>
        <dbReference type="ChEBI" id="CHEBI:90726"/>
        <dbReference type="EC" id="1.1.1.35"/>
    </reaction>
</comment>
<comment type="catalytic activity">
    <reaction evidence="1">
        <text>a (3S)-3-hydroxyacyl-CoA = a (2E)-enoyl-CoA + H2O</text>
        <dbReference type="Rhea" id="RHEA:16105"/>
        <dbReference type="ChEBI" id="CHEBI:15377"/>
        <dbReference type="ChEBI" id="CHEBI:57318"/>
        <dbReference type="ChEBI" id="CHEBI:58856"/>
        <dbReference type="EC" id="4.2.1.17"/>
    </reaction>
</comment>
<comment type="catalytic activity">
    <reaction evidence="1">
        <text>a 4-saturated-(3S)-3-hydroxyacyl-CoA = a (3E)-enoyl-CoA + H2O</text>
        <dbReference type="Rhea" id="RHEA:20724"/>
        <dbReference type="ChEBI" id="CHEBI:15377"/>
        <dbReference type="ChEBI" id="CHEBI:58521"/>
        <dbReference type="ChEBI" id="CHEBI:137480"/>
        <dbReference type="EC" id="4.2.1.17"/>
    </reaction>
</comment>
<comment type="catalytic activity">
    <reaction evidence="1">
        <text>(3S)-3-hydroxybutanoyl-CoA = (3R)-3-hydroxybutanoyl-CoA</text>
        <dbReference type="Rhea" id="RHEA:21760"/>
        <dbReference type="ChEBI" id="CHEBI:57315"/>
        <dbReference type="ChEBI" id="CHEBI:57316"/>
        <dbReference type="EC" id="5.1.2.3"/>
    </reaction>
</comment>
<comment type="catalytic activity">
    <reaction evidence="1">
        <text>a (3Z)-enoyl-CoA = a 4-saturated (2E)-enoyl-CoA</text>
        <dbReference type="Rhea" id="RHEA:45900"/>
        <dbReference type="ChEBI" id="CHEBI:85097"/>
        <dbReference type="ChEBI" id="CHEBI:85489"/>
        <dbReference type="EC" id="5.3.3.8"/>
    </reaction>
</comment>
<comment type="catalytic activity">
    <reaction evidence="1">
        <text>a (3E)-enoyl-CoA = a 4-saturated (2E)-enoyl-CoA</text>
        <dbReference type="Rhea" id="RHEA:45228"/>
        <dbReference type="ChEBI" id="CHEBI:58521"/>
        <dbReference type="ChEBI" id="CHEBI:85097"/>
        <dbReference type="EC" id="5.3.3.8"/>
    </reaction>
</comment>
<comment type="pathway">
    <text evidence="1">Lipid metabolism; fatty acid beta-oxidation.</text>
</comment>
<comment type="subunit">
    <text evidence="1">Heterotetramer of two alpha chains (FadB) and two beta chains (FadA).</text>
</comment>
<comment type="similarity">
    <text evidence="1">In the N-terminal section; belongs to the enoyl-CoA hydratase/isomerase family.</text>
</comment>
<comment type="similarity">
    <text evidence="1">In the C-terminal section; belongs to the 3-hydroxyacyl-CoA dehydrogenase family.</text>
</comment>
<name>FADB_CITK8</name>
<sequence>MLYKGDTLYLDWLEDGIAELVFDAPGSVNKLDTATVASLGQALDVLEKQTDLKGLLLRSNKAAFIVGADITEFLSLFLVPEEQLSQWLHFANSVFNRLEDLPVPTLSAINGYALGGGCECVLATDYRLVTPDLRIGLPETKLGIMPGFGGSVRMPRMLGADSALEIIAAGKDIGAEQALKIGLVDGVVKPEKLLDGAIAVLRQAIDGSLDWKAKRQPKLEPLKLSKIEAAMSFTIAKGMVAQTAGKHYPAPMIAVKTIEAAARFGREEALNLENKSFVPLAHTNEARALVGIFLNDQFVKGKAKKLTKDVETPKQAAVLGAGIMGGGIAYQSAWKGVPVIMKDINDKSLTLGMTEAAKLLNKQLERGRIDGLKLAGVISTIHPTLNYAGFDRVDVVVEAVVENPKVKKAVLAETEDNVRPDTVLASNTSTIPISELASALKRPENFCGMHFFNPVHRMPLVEIIRGEKSSDETIAKVVAWASKMGKTPIVVNDCPGFFVNRVLFPYFAGFSQLLRDGADFRKVDKVMEKQFGWPMGPAYLLDVVGIDTAHHAQAVMAAGFPQRMQKDYRDAIDALFDASRYGQKNGLGFWRYKEDSKGKPKKEEDAAVDSLLAEVSQPKRDFSDEEIIARMMIPMVNEVVRCLEEGIIASPAEADMALVYGLGFPPFHGGAFRWLDTLGSAKYLDMAQQYQHLGPLYEVPEGLRNKARHNEPYYPPVEPARPVGDLKTA</sequence>
<dbReference type="EC" id="4.2.1.17" evidence="1"/>
<dbReference type="EC" id="5.1.2.3" evidence="1"/>
<dbReference type="EC" id="5.3.3.8" evidence="1"/>
<dbReference type="EC" id="1.1.1.35" evidence="1"/>
<dbReference type="EMBL" id="CP000822">
    <property type="protein sequence ID" value="ABV11357.1"/>
    <property type="molecule type" value="Genomic_DNA"/>
</dbReference>
<dbReference type="RefSeq" id="WP_012131191.1">
    <property type="nucleotide sequence ID" value="NC_009792.1"/>
</dbReference>
<dbReference type="SMR" id="A8ACZ4"/>
<dbReference type="STRING" id="290338.CKO_00188"/>
<dbReference type="GeneID" id="45134478"/>
<dbReference type="KEGG" id="cko:CKO_00188"/>
<dbReference type="HOGENOM" id="CLU_009834_16_3_6"/>
<dbReference type="OrthoDB" id="5389341at2"/>
<dbReference type="UniPathway" id="UPA00659"/>
<dbReference type="Proteomes" id="UP000008148">
    <property type="component" value="Chromosome"/>
</dbReference>
<dbReference type="GO" id="GO:0036125">
    <property type="term" value="C:fatty acid beta-oxidation multienzyme complex"/>
    <property type="evidence" value="ECO:0007669"/>
    <property type="project" value="InterPro"/>
</dbReference>
<dbReference type="GO" id="GO:0008692">
    <property type="term" value="F:3-hydroxybutyryl-CoA epimerase activity"/>
    <property type="evidence" value="ECO:0007669"/>
    <property type="project" value="UniProtKB-UniRule"/>
</dbReference>
<dbReference type="GO" id="GO:0004165">
    <property type="term" value="F:delta(3)-delta(2)-enoyl-CoA isomerase activity"/>
    <property type="evidence" value="ECO:0007669"/>
    <property type="project" value="UniProtKB-UniRule"/>
</dbReference>
<dbReference type="GO" id="GO:0004300">
    <property type="term" value="F:enoyl-CoA hydratase activity"/>
    <property type="evidence" value="ECO:0007669"/>
    <property type="project" value="UniProtKB-UniRule"/>
</dbReference>
<dbReference type="GO" id="GO:0016509">
    <property type="term" value="F:long-chain-3-hydroxyacyl-CoA dehydrogenase activity"/>
    <property type="evidence" value="ECO:0007669"/>
    <property type="project" value="TreeGrafter"/>
</dbReference>
<dbReference type="GO" id="GO:0070403">
    <property type="term" value="F:NAD+ binding"/>
    <property type="evidence" value="ECO:0007669"/>
    <property type="project" value="InterPro"/>
</dbReference>
<dbReference type="GO" id="GO:0006635">
    <property type="term" value="P:fatty acid beta-oxidation"/>
    <property type="evidence" value="ECO:0007669"/>
    <property type="project" value="UniProtKB-UniRule"/>
</dbReference>
<dbReference type="CDD" id="cd06558">
    <property type="entry name" value="crotonase-like"/>
    <property type="match status" value="1"/>
</dbReference>
<dbReference type="FunFam" id="1.10.1040.50:FF:000001">
    <property type="entry name" value="Fatty acid oxidation complex subunit alpha"/>
    <property type="match status" value="1"/>
</dbReference>
<dbReference type="FunFam" id="3.90.226.10:FF:000018">
    <property type="entry name" value="Fatty acid oxidation complex subunit alpha"/>
    <property type="match status" value="1"/>
</dbReference>
<dbReference type="FunFam" id="3.40.50.720:FF:000009">
    <property type="entry name" value="Fatty oxidation complex, alpha subunit"/>
    <property type="match status" value="1"/>
</dbReference>
<dbReference type="Gene3D" id="1.10.1040.50">
    <property type="match status" value="1"/>
</dbReference>
<dbReference type="Gene3D" id="3.90.226.10">
    <property type="entry name" value="2-enoyl-CoA Hydratase, Chain A, domain 1"/>
    <property type="match status" value="1"/>
</dbReference>
<dbReference type="Gene3D" id="3.40.50.720">
    <property type="entry name" value="NAD(P)-binding Rossmann-like Domain"/>
    <property type="match status" value="1"/>
</dbReference>
<dbReference type="HAMAP" id="MF_01621">
    <property type="entry name" value="FadB"/>
    <property type="match status" value="1"/>
</dbReference>
<dbReference type="InterPro" id="IPR006180">
    <property type="entry name" value="3-OHacyl-CoA_DH_CS"/>
</dbReference>
<dbReference type="InterPro" id="IPR006176">
    <property type="entry name" value="3-OHacyl-CoA_DH_NAD-bd"/>
</dbReference>
<dbReference type="InterPro" id="IPR006108">
    <property type="entry name" value="3HC_DH_C"/>
</dbReference>
<dbReference type="InterPro" id="IPR008927">
    <property type="entry name" value="6-PGluconate_DH-like_C_sf"/>
</dbReference>
<dbReference type="InterPro" id="IPR029045">
    <property type="entry name" value="ClpP/crotonase-like_dom_sf"/>
</dbReference>
<dbReference type="InterPro" id="IPR018376">
    <property type="entry name" value="Enoyl-CoA_hyd/isom_CS"/>
</dbReference>
<dbReference type="InterPro" id="IPR001753">
    <property type="entry name" value="Enoyl-CoA_hydra/iso"/>
</dbReference>
<dbReference type="InterPro" id="IPR050136">
    <property type="entry name" value="FA_oxidation_alpha_subunit"/>
</dbReference>
<dbReference type="InterPro" id="IPR012799">
    <property type="entry name" value="FadB"/>
</dbReference>
<dbReference type="InterPro" id="IPR036291">
    <property type="entry name" value="NAD(P)-bd_dom_sf"/>
</dbReference>
<dbReference type="NCBIfam" id="TIGR02437">
    <property type="entry name" value="FadB"/>
    <property type="match status" value="1"/>
</dbReference>
<dbReference type="NCBIfam" id="NF008727">
    <property type="entry name" value="PRK11730.1"/>
    <property type="match status" value="1"/>
</dbReference>
<dbReference type="PANTHER" id="PTHR43612">
    <property type="entry name" value="TRIFUNCTIONAL ENZYME SUBUNIT ALPHA"/>
    <property type="match status" value="1"/>
</dbReference>
<dbReference type="PANTHER" id="PTHR43612:SF3">
    <property type="entry name" value="TRIFUNCTIONAL ENZYME SUBUNIT ALPHA, MITOCHONDRIAL"/>
    <property type="match status" value="1"/>
</dbReference>
<dbReference type="Pfam" id="PF00725">
    <property type="entry name" value="3HCDH"/>
    <property type="match status" value="2"/>
</dbReference>
<dbReference type="Pfam" id="PF02737">
    <property type="entry name" value="3HCDH_N"/>
    <property type="match status" value="1"/>
</dbReference>
<dbReference type="Pfam" id="PF00378">
    <property type="entry name" value="ECH_1"/>
    <property type="match status" value="1"/>
</dbReference>
<dbReference type="SUPFAM" id="SSF48179">
    <property type="entry name" value="6-phosphogluconate dehydrogenase C-terminal domain-like"/>
    <property type="match status" value="2"/>
</dbReference>
<dbReference type="SUPFAM" id="SSF52096">
    <property type="entry name" value="ClpP/crotonase"/>
    <property type="match status" value="1"/>
</dbReference>
<dbReference type="SUPFAM" id="SSF51735">
    <property type="entry name" value="NAD(P)-binding Rossmann-fold domains"/>
    <property type="match status" value="1"/>
</dbReference>
<dbReference type="PROSITE" id="PS00067">
    <property type="entry name" value="3HCDH"/>
    <property type="match status" value="1"/>
</dbReference>
<dbReference type="PROSITE" id="PS00166">
    <property type="entry name" value="ENOYL_COA_HYDRATASE"/>
    <property type="match status" value="1"/>
</dbReference>